<accession>C5M2I3</accession>
<dbReference type="EMBL" id="GG692395">
    <property type="protein sequence ID" value="EER35533.1"/>
    <property type="molecule type" value="Genomic_DNA"/>
</dbReference>
<dbReference type="RefSeq" id="XP_002545491.1">
    <property type="nucleotide sequence ID" value="XM_002545445.1"/>
</dbReference>
<dbReference type="SMR" id="C5M2I3"/>
<dbReference type="STRING" id="294747.C5M2I3"/>
<dbReference type="EnsemblFungi" id="CTRG_00272-t43_1">
    <property type="protein sequence ID" value="CTRG_00272-t43_1-p1"/>
    <property type="gene ID" value="CTRG_00272"/>
</dbReference>
<dbReference type="GeneID" id="8301227"/>
<dbReference type="KEGG" id="ctp:CTRG_00272"/>
<dbReference type="VEuPathDB" id="FungiDB:CTRG_00272"/>
<dbReference type="eggNOG" id="ENOG502SAXB">
    <property type="taxonomic scope" value="Eukaryota"/>
</dbReference>
<dbReference type="HOGENOM" id="CLU_064540_0_0_1"/>
<dbReference type="OrthoDB" id="10261384at2759"/>
<dbReference type="Proteomes" id="UP000002037">
    <property type="component" value="Unassembled WGS sequence"/>
</dbReference>
<dbReference type="GO" id="GO:0030674">
    <property type="term" value="F:protein-macromolecule adaptor activity"/>
    <property type="evidence" value="ECO:0007669"/>
    <property type="project" value="TreeGrafter"/>
</dbReference>
<dbReference type="GO" id="GO:0016192">
    <property type="term" value="P:vesicle-mediated transport"/>
    <property type="evidence" value="ECO:0007669"/>
    <property type="project" value="InterPro"/>
</dbReference>
<dbReference type="Gene3D" id="3.40.50.11960">
    <property type="match status" value="1"/>
</dbReference>
<dbReference type="InterPro" id="IPR034627">
    <property type="entry name" value="Irc6"/>
</dbReference>
<dbReference type="PANTHER" id="PTHR28043">
    <property type="entry name" value="INCREASED RECOMBINATION CENTERS PROTEIN 6"/>
    <property type="match status" value="1"/>
</dbReference>
<dbReference type="PANTHER" id="PTHR28043:SF1">
    <property type="entry name" value="INCREASED RECOMBINATION CENTERS PROTEIN 6"/>
    <property type="match status" value="1"/>
</dbReference>
<dbReference type="Pfam" id="PF10199">
    <property type="entry name" value="Adaptin_binding"/>
    <property type="match status" value="1"/>
</dbReference>
<protein>
    <recommendedName>
        <fullName>Increased recombination centers protein 6</fullName>
    </recommendedName>
</protein>
<feature type="chain" id="PRO_0000399220" description="Increased recombination centers protein 6">
    <location>
        <begin position="1"/>
        <end position="275"/>
    </location>
</feature>
<keyword id="KW-0160">Chromosomal rearrangement</keyword>
<keyword id="KW-1185">Reference proteome</keyword>
<sequence>MIPNHILILGSPNSGKLRVSKLISNDKDFPEIKENESHSGIIIKTSLSTKYYHIKLNILIDEYPEERNKSVTDEEKLLELEKWFNEFKSEEFGELREVLDGLVFTVNMKADSLEFIEKALETVSEIRTSLGDEESQWDGFISIIGSTTQGESVDDDTVEEIEDLVITHGFEFINLNTQGINEFKEKQGKDRVVELIESHEWTNMELLKVNPDQYEKNKMNKVEQMKQNLLEEKESMDLDVVFSKLSVAKERAEDMTQEQKEKYANEIIEEIIDFI</sequence>
<name>IRC6_CANTT</name>
<organism>
    <name type="scientific">Candida tropicalis (strain ATCC MYA-3404 / T1)</name>
    <name type="common">Yeast</name>
    <dbReference type="NCBI Taxonomy" id="294747"/>
    <lineage>
        <taxon>Eukaryota</taxon>
        <taxon>Fungi</taxon>
        <taxon>Dikarya</taxon>
        <taxon>Ascomycota</taxon>
        <taxon>Saccharomycotina</taxon>
        <taxon>Pichiomycetes</taxon>
        <taxon>Debaryomycetaceae</taxon>
        <taxon>Candida/Lodderomyces clade</taxon>
        <taxon>Candida</taxon>
    </lineage>
</organism>
<gene>
    <name type="primary">IRC6</name>
    <name type="ORF">CTRG_00272</name>
</gene>
<evidence type="ECO:0000250" key="1"/>
<evidence type="ECO:0000305" key="2"/>
<reference key="1">
    <citation type="journal article" date="2009" name="Nature">
        <title>Evolution of pathogenicity and sexual reproduction in eight Candida genomes.</title>
        <authorList>
            <person name="Butler G."/>
            <person name="Rasmussen M.D."/>
            <person name="Lin M.F."/>
            <person name="Santos M.A.S."/>
            <person name="Sakthikumar S."/>
            <person name="Munro C.A."/>
            <person name="Rheinbay E."/>
            <person name="Grabherr M."/>
            <person name="Forche A."/>
            <person name="Reedy J.L."/>
            <person name="Agrafioti I."/>
            <person name="Arnaud M.B."/>
            <person name="Bates S."/>
            <person name="Brown A.J.P."/>
            <person name="Brunke S."/>
            <person name="Costanzo M.C."/>
            <person name="Fitzpatrick D.A."/>
            <person name="de Groot P.W.J."/>
            <person name="Harris D."/>
            <person name="Hoyer L.L."/>
            <person name="Hube B."/>
            <person name="Klis F.M."/>
            <person name="Kodira C."/>
            <person name="Lennard N."/>
            <person name="Logue M.E."/>
            <person name="Martin R."/>
            <person name="Neiman A.M."/>
            <person name="Nikolaou E."/>
            <person name="Quail M.A."/>
            <person name="Quinn J."/>
            <person name="Santos M.C."/>
            <person name="Schmitzberger F.F."/>
            <person name="Sherlock G."/>
            <person name="Shah P."/>
            <person name="Silverstein K.A.T."/>
            <person name="Skrzypek M.S."/>
            <person name="Soll D."/>
            <person name="Staggs R."/>
            <person name="Stansfield I."/>
            <person name="Stumpf M.P.H."/>
            <person name="Sudbery P.E."/>
            <person name="Srikantha T."/>
            <person name="Zeng Q."/>
            <person name="Berman J."/>
            <person name="Berriman M."/>
            <person name="Heitman J."/>
            <person name="Gow N.A.R."/>
            <person name="Lorenz M.C."/>
            <person name="Birren B.W."/>
            <person name="Kellis M."/>
            <person name="Cuomo C.A."/>
        </authorList>
    </citation>
    <scope>NUCLEOTIDE SEQUENCE [LARGE SCALE GENOMIC DNA]</scope>
    <source>
        <strain>ATCC MYA-3404 / T1</strain>
    </source>
</reference>
<comment type="function">
    <text evidence="1">Involved in gross chromosomal rearrangements (GCRs) and telomere healing.</text>
</comment>
<comment type="similarity">
    <text evidence="2">Belongs to the IRC6 family.</text>
</comment>
<proteinExistence type="inferred from homology"/>